<name>RS9_BRUO2</name>
<accession>A5VPX4</accession>
<keyword id="KW-0687">Ribonucleoprotein</keyword>
<keyword id="KW-0689">Ribosomal protein</keyword>
<organism>
    <name type="scientific">Brucella ovis (strain ATCC 25840 / 63/290 / NCTC 10512)</name>
    <dbReference type="NCBI Taxonomy" id="444178"/>
    <lineage>
        <taxon>Bacteria</taxon>
        <taxon>Pseudomonadati</taxon>
        <taxon>Pseudomonadota</taxon>
        <taxon>Alphaproteobacteria</taxon>
        <taxon>Hyphomicrobiales</taxon>
        <taxon>Brucellaceae</taxon>
        <taxon>Brucella/Ochrobactrum group</taxon>
        <taxon>Brucella</taxon>
    </lineage>
</organism>
<feature type="chain" id="PRO_1000051179" description="Small ribosomal subunit protein uS9">
    <location>
        <begin position="1"/>
        <end position="158"/>
    </location>
</feature>
<gene>
    <name evidence="1" type="primary">rpsI</name>
    <name type="ordered locus">BOV_0786</name>
</gene>
<evidence type="ECO:0000255" key="1">
    <source>
        <dbReference type="HAMAP-Rule" id="MF_00532"/>
    </source>
</evidence>
<evidence type="ECO:0000305" key="2"/>
<protein>
    <recommendedName>
        <fullName evidence="1">Small ribosomal subunit protein uS9</fullName>
    </recommendedName>
    <alternativeName>
        <fullName evidence="2">30S ribosomal protein S9</fullName>
    </alternativeName>
</protein>
<proteinExistence type="inferred from homology"/>
<reference key="1">
    <citation type="journal article" date="2009" name="PLoS ONE">
        <title>Genome degradation in Brucella ovis corresponds with narrowing of its host range and tissue tropism.</title>
        <authorList>
            <person name="Tsolis R.M."/>
            <person name="Seshadri R."/>
            <person name="Santos R.L."/>
            <person name="Sangari F.J."/>
            <person name="Lobo J.M."/>
            <person name="de Jong M.F."/>
            <person name="Ren Q."/>
            <person name="Myers G."/>
            <person name="Brinkac L.M."/>
            <person name="Nelson W.C."/>
            <person name="Deboy R.T."/>
            <person name="Angiuoli S."/>
            <person name="Khouri H."/>
            <person name="Dimitrov G."/>
            <person name="Robinson J.R."/>
            <person name="Mulligan S."/>
            <person name="Walker R.L."/>
            <person name="Elzer P.E."/>
            <person name="Hassan K.A."/>
            <person name="Paulsen I.T."/>
        </authorList>
    </citation>
    <scope>NUCLEOTIDE SEQUENCE [LARGE SCALE GENOMIC DNA]</scope>
    <source>
        <strain>ATCC 25840 / 63/290 / NCTC 10512</strain>
    </source>
</reference>
<comment type="similarity">
    <text evidence="1">Belongs to the universal ribosomal protein uS9 family.</text>
</comment>
<dbReference type="EMBL" id="CP000708">
    <property type="protein sequence ID" value="ABQ60535.1"/>
    <property type="molecule type" value="Genomic_DNA"/>
</dbReference>
<dbReference type="RefSeq" id="WP_002963925.1">
    <property type="nucleotide sequence ID" value="NC_009505.1"/>
</dbReference>
<dbReference type="SMR" id="A5VPX4"/>
<dbReference type="GeneID" id="97533901"/>
<dbReference type="KEGG" id="bov:BOV_0786"/>
<dbReference type="HOGENOM" id="CLU_046483_2_0_5"/>
<dbReference type="PhylomeDB" id="A5VPX4"/>
<dbReference type="Proteomes" id="UP000006383">
    <property type="component" value="Chromosome I"/>
</dbReference>
<dbReference type="GO" id="GO:0022627">
    <property type="term" value="C:cytosolic small ribosomal subunit"/>
    <property type="evidence" value="ECO:0007669"/>
    <property type="project" value="TreeGrafter"/>
</dbReference>
<dbReference type="GO" id="GO:0003723">
    <property type="term" value="F:RNA binding"/>
    <property type="evidence" value="ECO:0007669"/>
    <property type="project" value="TreeGrafter"/>
</dbReference>
<dbReference type="GO" id="GO:0003735">
    <property type="term" value="F:structural constituent of ribosome"/>
    <property type="evidence" value="ECO:0007669"/>
    <property type="project" value="InterPro"/>
</dbReference>
<dbReference type="GO" id="GO:0006412">
    <property type="term" value="P:translation"/>
    <property type="evidence" value="ECO:0007669"/>
    <property type="project" value="UniProtKB-UniRule"/>
</dbReference>
<dbReference type="FunFam" id="3.30.230.10:FF:000034">
    <property type="entry name" value="30S ribosomal protein S9"/>
    <property type="match status" value="1"/>
</dbReference>
<dbReference type="Gene3D" id="3.30.230.10">
    <property type="match status" value="1"/>
</dbReference>
<dbReference type="HAMAP" id="MF_00532_B">
    <property type="entry name" value="Ribosomal_uS9_B"/>
    <property type="match status" value="1"/>
</dbReference>
<dbReference type="InterPro" id="IPR020568">
    <property type="entry name" value="Ribosomal_Su5_D2-typ_SF"/>
</dbReference>
<dbReference type="InterPro" id="IPR000754">
    <property type="entry name" value="Ribosomal_uS9"/>
</dbReference>
<dbReference type="InterPro" id="IPR023035">
    <property type="entry name" value="Ribosomal_uS9_bac/plastid"/>
</dbReference>
<dbReference type="InterPro" id="IPR020574">
    <property type="entry name" value="Ribosomal_uS9_CS"/>
</dbReference>
<dbReference type="InterPro" id="IPR014721">
    <property type="entry name" value="Ribsml_uS5_D2-typ_fold_subgr"/>
</dbReference>
<dbReference type="NCBIfam" id="NF001099">
    <property type="entry name" value="PRK00132.1"/>
    <property type="match status" value="1"/>
</dbReference>
<dbReference type="PANTHER" id="PTHR21569">
    <property type="entry name" value="RIBOSOMAL PROTEIN S9"/>
    <property type="match status" value="1"/>
</dbReference>
<dbReference type="PANTHER" id="PTHR21569:SF1">
    <property type="entry name" value="SMALL RIBOSOMAL SUBUNIT PROTEIN US9M"/>
    <property type="match status" value="1"/>
</dbReference>
<dbReference type="Pfam" id="PF00380">
    <property type="entry name" value="Ribosomal_S9"/>
    <property type="match status" value="1"/>
</dbReference>
<dbReference type="SUPFAM" id="SSF54211">
    <property type="entry name" value="Ribosomal protein S5 domain 2-like"/>
    <property type="match status" value="1"/>
</dbReference>
<dbReference type="PROSITE" id="PS00360">
    <property type="entry name" value="RIBOSOMAL_S9"/>
    <property type="match status" value="1"/>
</dbReference>
<sequence>MAESINSLEELGTVAKTEAAAPVHVQKLDAQGRAYATGKRKDAVARVWVKPGTGKITVNDKEFEKYFARPVLQMILQQPIVASNRAGQFDIVATVAGGGLSGQAGAVRHGISKALTYYEPGLRTVLKKGGFLTRDSRVVERKKYGKAKARRSFQFSKR</sequence>